<accession>Q9A716</accession>
<keyword id="KW-0002">3D-structure</keyword>
<keyword id="KW-0997">Cell inner membrane</keyword>
<keyword id="KW-1003">Cell membrane</keyword>
<keyword id="KW-0378">Hydrolase</keyword>
<keyword id="KW-0441">Lipid A biosynthesis</keyword>
<keyword id="KW-0444">Lipid biosynthesis</keyword>
<keyword id="KW-0443">Lipid metabolism</keyword>
<keyword id="KW-0460">Magnesium</keyword>
<keyword id="KW-0472">Membrane</keyword>
<keyword id="KW-1185">Reference proteome</keyword>
<dbReference type="EC" id="3.6.1.54" evidence="1"/>
<dbReference type="EMBL" id="AE005673">
    <property type="protein sequence ID" value="AAK23885.1"/>
    <property type="molecule type" value="Genomic_DNA"/>
</dbReference>
<dbReference type="PIR" id="A87486">
    <property type="entry name" value="A87486"/>
</dbReference>
<dbReference type="RefSeq" id="NP_420717.1">
    <property type="nucleotide sequence ID" value="NC_002696.2"/>
</dbReference>
<dbReference type="RefSeq" id="WP_010919776.1">
    <property type="nucleotide sequence ID" value="NC_002696.2"/>
</dbReference>
<dbReference type="PDB" id="4GGM">
    <property type="method" value="X-ray"/>
    <property type="resolution" value="2.90 A"/>
    <property type="chains" value="X=1-280"/>
</dbReference>
<dbReference type="PDB" id="4J6E">
    <property type="method" value="X-ray"/>
    <property type="resolution" value="2.52 A"/>
    <property type="chains" value="A=1-280"/>
</dbReference>
<dbReference type="PDBsum" id="4GGM"/>
<dbReference type="PDBsum" id="4J6E"/>
<dbReference type="SMR" id="Q9A716"/>
<dbReference type="STRING" id="190650.CC_1910"/>
<dbReference type="EnsemblBacteria" id="AAK23885">
    <property type="protein sequence ID" value="AAK23885"/>
    <property type="gene ID" value="CC_1910"/>
</dbReference>
<dbReference type="KEGG" id="ccr:CC_1910"/>
<dbReference type="PATRIC" id="fig|190650.5.peg.1927"/>
<dbReference type="eggNOG" id="COG3494">
    <property type="taxonomic scope" value="Bacteria"/>
</dbReference>
<dbReference type="HOGENOM" id="CLU_085042_1_0_5"/>
<dbReference type="BioCyc" id="CAULO:CC1910-MONOMER"/>
<dbReference type="UniPathway" id="UPA00359">
    <property type="reaction ID" value="UER00480"/>
</dbReference>
<dbReference type="Proteomes" id="UP000001816">
    <property type="component" value="Chromosome"/>
</dbReference>
<dbReference type="GO" id="GO:0005886">
    <property type="term" value="C:plasma membrane"/>
    <property type="evidence" value="ECO:0007669"/>
    <property type="project" value="UniProtKB-SubCell"/>
</dbReference>
<dbReference type="GO" id="GO:0008758">
    <property type="term" value="F:UDP-2,3-diacylglucosamine hydrolase activity"/>
    <property type="evidence" value="ECO:0000314"/>
    <property type="project" value="UniProtKB"/>
</dbReference>
<dbReference type="GO" id="GO:0009245">
    <property type="term" value="P:lipid A biosynthetic process"/>
    <property type="evidence" value="ECO:0000316"/>
    <property type="project" value="UniProtKB"/>
</dbReference>
<dbReference type="FunFam" id="3.40.50.20:FF:000065">
    <property type="entry name" value="UDP-2,3-diacylglucosamine pyrophosphatase LpxI"/>
    <property type="match status" value="1"/>
</dbReference>
<dbReference type="Gene3D" id="3.40.140.80">
    <property type="match status" value="1"/>
</dbReference>
<dbReference type="Gene3D" id="3.40.50.20">
    <property type="match status" value="1"/>
</dbReference>
<dbReference type="InterPro" id="IPR053174">
    <property type="entry name" value="LpxI"/>
</dbReference>
<dbReference type="InterPro" id="IPR010415">
    <property type="entry name" value="LpxI_C"/>
</dbReference>
<dbReference type="InterPro" id="IPR043167">
    <property type="entry name" value="LpxI_C_sf"/>
</dbReference>
<dbReference type="InterPro" id="IPR041255">
    <property type="entry name" value="LpxI_N"/>
</dbReference>
<dbReference type="NCBIfam" id="NF047836">
    <property type="entry name" value="UDPdiagluDHLpxI"/>
    <property type="match status" value="1"/>
</dbReference>
<dbReference type="PANTHER" id="PTHR39962">
    <property type="entry name" value="BLL4848 PROTEIN"/>
    <property type="match status" value="1"/>
</dbReference>
<dbReference type="PANTHER" id="PTHR39962:SF1">
    <property type="entry name" value="LPXI FAMILY PROTEIN"/>
    <property type="match status" value="1"/>
</dbReference>
<dbReference type="Pfam" id="PF06230">
    <property type="entry name" value="LpxI_C"/>
    <property type="match status" value="1"/>
</dbReference>
<dbReference type="Pfam" id="PF17930">
    <property type="entry name" value="LpxI_N"/>
    <property type="match status" value="1"/>
</dbReference>
<sequence length="280" mass="29634">MRKLGLIAGGGALPVELASHCEAAGRAFAVMRLRSFADPSLDRYPGADVGIGEFGKIFKALRAEGCDVVCFAGNVSRPDFSALMPDARGLKVLPSLIVAARKGDDALLRRVLDEFEKEGFEIEGAHEVMGEMTLPRGRLGKVSPAPEHMADIDKALDVAREIGRLDIGQGAVVCEGLVLAVEAQEGTDAMLRRVADLPEAIRGRAERRLGVLAKAPKPIQETRVDLPTIGVATIHRAARAGLAGIVGEAGRLLVVDREAVIAAADDLGLFVLGVDPQERP</sequence>
<reference key="1">
    <citation type="journal article" date="2001" name="Proc. Natl. Acad. Sci. U.S.A.">
        <title>Complete genome sequence of Caulobacter crescentus.</title>
        <authorList>
            <person name="Nierman W.C."/>
            <person name="Feldblyum T.V."/>
            <person name="Laub M.T."/>
            <person name="Paulsen I.T."/>
            <person name="Nelson K.E."/>
            <person name="Eisen J.A."/>
            <person name="Heidelberg J.F."/>
            <person name="Alley M.R.K."/>
            <person name="Ohta N."/>
            <person name="Maddock J.R."/>
            <person name="Potocka I."/>
            <person name="Nelson W.C."/>
            <person name="Newton A."/>
            <person name="Stephens C."/>
            <person name="Phadke N.D."/>
            <person name="Ely B."/>
            <person name="DeBoy R.T."/>
            <person name="Dodson R.J."/>
            <person name="Durkin A.S."/>
            <person name="Gwinn M.L."/>
            <person name="Haft D.H."/>
            <person name="Kolonay J.F."/>
            <person name="Smit J."/>
            <person name="Craven M.B."/>
            <person name="Khouri H.M."/>
            <person name="Shetty J."/>
            <person name="Berry K.J."/>
            <person name="Utterback T.R."/>
            <person name="Tran K."/>
            <person name="Wolf A.M."/>
            <person name="Vamathevan J.J."/>
            <person name="Ermolaeva M.D."/>
            <person name="White O."/>
            <person name="Salzberg S.L."/>
            <person name="Venter J.C."/>
            <person name="Shapiro L."/>
            <person name="Fraser C.M."/>
        </authorList>
    </citation>
    <scope>NUCLEOTIDE SEQUENCE [LARGE SCALE GENOMIC DNA]</scope>
    <source>
        <strain>ATCC 19089 / CIP 103742 / CB 15</strain>
    </source>
</reference>
<reference key="2">
    <citation type="journal article" date="2010" name="Biochemistry">
        <title>An alternative route for UDP-diacylglucosamine hydrolysis in bacterial lipid A biosynthesis.</title>
        <authorList>
            <person name="Metzger L.E. IV"/>
            <person name="Raetz C.R."/>
        </authorList>
    </citation>
    <scope>IDENTIFICATION</scope>
    <scope>FUNCTION</scope>
    <scope>CATALYTIC ACTIVITY</scope>
    <scope>COFACTOR</scope>
    <scope>BIOPHYSICOCHEMICAL PROPERTIES</scope>
    <scope>SUBSTRATE SPECIFICITY</scope>
    <scope>ACTIVITY REGULATION</scope>
    <scope>PATHWAY</scope>
    <scope>REACTION MECHANISM</scope>
    <source>
        <strain>ATCC 19089 / CIP 103742 / CB 15</strain>
    </source>
</reference>
<reference key="3">
    <citation type="journal article" date="2012" name="Nat. Struct. Mol. Biol.">
        <title>LpxI structures reveal how a lipid A precursor is synthesized.</title>
        <authorList>
            <person name="Metzger L.E."/>
            <person name="Lee J.K."/>
            <person name="Finer-Moore J.S."/>
            <person name="Raetz C.R."/>
            <person name="Stroud R.M."/>
        </authorList>
    </citation>
    <scope>X-RAY CRYSTALLOGRAPHY (2.52 ANGSTROMS) OF WILD-TYPE IN COMPLEX WITH ITS PRODUCT LIPID X AND MUTANT ALA-225 IN COMPLEX WITH SUBSTRATE</scope>
    <scope>SUBUNIT</scope>
    <scope>SUBCELLULAR LOCATION</scope>
    <scope>DOMAIN</scope>
    <scope>MUTAGENESIS OF GLU-182; GLU-185; THR-187; ARG-193; GLN-220 AND ASP-225</scope>
</reference>
<evidence type="ECO:0000269" key="1">
    <source>
    </source>
</evidence>
<evidence type="ECO:0000269" key="2">
    <source>
    </source>
</evidence>
<evidence type="ECO:0000303" key="3">
    <source>
    </source>
</evidence>
<evidence type="ECO:0000305" key="4"/>
<evidence type="ECO:0000305" key="5">
    <source>
    </source>
</evidence>
<evidence type="ECO:0000305" key="6">
    <source>
    </source>
</evidence>
<evidence type="ECO:0000312" key="7">
    <source>
        <dbReference type="EMBL" id="AAK23885.1"/>
    </source>
</evidence>
<evidence type="ECO:0007744" key="8">
    <source>
        <dbReference type="PDB" id="4J6E"/>
    </source>
</evidence>
<feature type="chain" id="PRO_0000440978" description="UDP-2,3-diacylglucosamine pyrophosphatase LpxI">
    <location>
        <begin position="1"/>
        <end position="280"/>
    </location>
</feature>
<feature type="binding site" evidence="2 8">
    <location>
        <position position="12"/>
    </location>
    <ligand>
        <name>substrate</name>
    </ligand>
</feature>
<feature type="binding site" evidence="2 8">
    <location>
        <begin position="74"/>
        <end position="75"/>
    </location>
    <ligand>
        <name>substrate</name>
    </ligand>
</feature>
<feature type="binding site" evidence="2 8">
    <location>
        <position position="169"/>
    </location>
    <ligand>
        <name>substrate</name>
    </ligand>
</feature>
<feature type="binding site" evidence="2 8">
    <location>
        <begin position="187"/>
        <end position="188"/>
    </location>
    <ligand>
        <name>substrate</name>
    </ligand>
</feature>
<feature type="binding site" evidence="2 8">
    <location>
        <position position="214"/>
    </location>
    <ligand>
        <name>substrate</name>
    </ligand>
</feature>
<feature type="binding site" evidence="2 8">
    <location>
        <begin position="226"/>
        <end position="233"/>
    </location>
    <ligand>
        <name>substrate</name>
    </ligand>
</feature>
<feature type="mutagenesis site" description="Loss of catalytic activity." evidence="2">
    <original>E</original>
    <variation>A</variation>
    <location>
        <position position="182"/>
    </location>
</feature>
<feature type="mutagenesis site" description="Highly reduced catalytic activity." evidence="2">
    <original>E</original>
    <variation>A</variation>
    <location>
        <position position="185"/>
    </location>
</feature>
<feature type="mutagenesis site" description="Highly reduced catalytic activity." evidence="2">
    <original>T</original>
    <variation>A</variation>
    <location>
        <position position="187"/>
    </location>
</feature>
<feature type="mutagenesis site" description="Wild-type level of catalytic activity." evidence="2">
    <original>R</original>
    <variation>A</variation>
    <location>
        <position position="193"/>
    </location>
</feature>
<feature type="mutagenesis site" description="Loss of catalytic activity." evidence="2">
    <original>Q</original>
    <variation>A</variation>
    <location>
        <position position="220"/>
    </location>
</feature>
<feature type="mutagenesis site" description="Loss of catalytic activity. Still able to bind substrate." evidence="2">
    <original>D</original>
    <variation>A</variation>
    <location>
        <position position="225"/>
    </location>
</feature>
<comment type="function">
    <text evidence="1">Hydrolyzes the pyrophosphate bond of UDP-2,3-diacylglucosamine to form 2,3-diacylglucosamine 1-phosphate (lipid X) and UMP by catalyzing the attack of water at the beta-P atom. Involved in the biosynthesis of lipid A, a phosphorylated glycolipid that anchors the lipopolysaccharide to the outer membrane of the cell. Can functionally complement lpxH deficiency in E.coli. Cannot use CDP-diacylglycerol as substrate.</text>
</comment>
<comment type="catalytic activity">
    <reaction evidence="1">
        <text>UDP-2-N,3-O-bis[(3R)-3-hydroxytetradecanoyl]-alpha-D-glucosamine + H2O = 2-N,3-O-bis[(3R)-3-hydroxytetradecanoyl]-alpha-D-glucosaminyl 1-phosphate + UMP + 2 H(+)</text>
        <dbReference type="Rhea" id="RHEA:25213"/>
        <dbReference type="ChEBI" id="CHEBI:15377"/>
        <dbReference type="ChEBI" id="CHEBI:15378"/>
        <dbReference type="ChEBI" id="CHEBI:57865"/>
        <dbReference type="ChEBI" id="CHEBI:57957"/>
        <dbReference type="ChEBI" id="CHEBI:78847"/>
        <dbReference type="EC" id="3.6.1.54"/>
    </reaction>
</comment>
<comment type="cofactor">
    <cofactor evidence="1">
        <name>Mg(2+)</name>
        <dbReference type="ChEBI" id="CHEBI:18420"/>
    </cofactor>
    <text evidence="1">To a lesser extent, can also use Mn(2+) or Co(2+).</text>
</comment>
<comment type="activity regulation">
    <text evidence="1">Inhibited by high concentrations of Cu(2+) and Zn(2+). Completely inhibited by EDTA in vitro.</text>
</comment>
<comment type="biophysicochemical properties">
    <kinetics>
        <KM evidence="1">105 uM for UDP-2-N,3-O-bis((3R)-3-hydroxytetradecanoyl)-alpha-D-glucosamine</KM>
        <Vmax evidence="1">69.0 umol/min/mg enzyme</Vmax>
    </kinetics>
    <phDependence>
        <text evidence="1">Optimum pH is 7-9. The activity is relatively constant between pH 6.5 and 9 but declines sharply below pH 6.</text>
    </phDependence>
</comment>
<comment type="pathway">
    <text evidence="5">Glycolipid biosynthesis; lipid IV(A) biosynthesis; lipid IV(A) from (3R)-3-hydroxytetradecanoyl-[acyl-carrier-protein] and UDP-N-acetyl-alpha-D-glucosamine: step 4/6.</text>
</comment>
<comment type="subunit">
    <text evidence="2">Homodimer.</text>
</comment>
<comment type="subcellular location">
    <subcellularLocation>
        <location evidence="6">Cell inner membrane</location>
        <topology evidence="6">Peripheral membrane protein</topology>
        <orientation evidence="6">Cytoplasmic side</orientation>
    </subcellularLocation>
</comment>
<comment type="domain">
    <text evidence="2">Consists of two domains: an N-terminal lipid X binding domain (LXD) attached by a flexible linker to a C-terminal catalytic domain (ICD). Binding of UDP-2,3-diacylglucosamine by LpxI induces a conformational switch that brings the catalytic domain close to the lipid-binding domain for specific recognition of the substrate and catalysis.</text>
</comment>
<comment type="miscellaneous">
    <text evidence="5">LpxI generates the same products from the same substrate than LpxH but by a different hydrolytic mechanism. LpxH and LpxI share no sequence similarity and show a different taxonomic distribution.</text>
</comment>
<comment type="similarity">
    <text evidence="4">Belongs to the LpxI family.</text>
</comment>
<gene>
    <name evidence="3" type="primary">lpxI</name>
    <name evidence="7" type="ordered locus">CC_1910</name>
</gene>
<organism>
    <name type="scientific">Caulobacter vibrioides (strain ATCC 19089 / CIP 103742 / CB 15)</name>
    <name type="common">Caulobacter crescentus</name>
    <dbReference type="NCBI Taxonomy" id="190650"/>
    <lineage>
        <taxon>Bacteria</taxon>
        <taxon>Pseudomonadati</taxon>
        <taxon>Pseudomonadota</taxon>
        <taxon>Alphaproteobacteria</taxon>
        <taxon>Caulobacterales</taxon>
        <taxon>Caulobacteraceae</taxon>
        <taxon>Caulobacter</taxon>
    </lineage>
</organism>
<protein>
    <recommendedName>
        <fullName evidence="3">UDP-2,3-diacylglucosamine pyrophosphatase LpxI</fullName>
        <ecNumber evidence="1">3.6.1.54</ecNumber>
    </recommendedName>
    <alternativeName>
        <fullName evidence="3">UDP-2,3-diacylglucosamine hydrolase LpxI</fullName>
    </alternativeName>
</protein>
<proteinExistence type="evidence at protein level"/>
<name>LPXI_CAUVC</name>